<organism>
    <name type="scientific">Citrobacter freundii</name>
    <dbReference type="NCBI Taxonomy" id="546"/>
    <lineage>
        <taxon>Bacteria</taxon>
        <taxon>Pseudomonadati</taxon>
        <taxon>Pseudomonadota</taxon>
        <taxon>Gammaproteobacteria</taxon>
        <taxon>Enterobacterales</taxon>
        <taxon>Enterobacteriaceae</taxon>
        <taxon>Citrobacter</taxon>
        <taxon>Citrobacter freundii complex</taxon>
    </lineage>
</organism>
<name>PDUC_CITFR</name>
<protein>
    <recommendedName>
        <fullName>Propanediol dehydratase large subunit</fullName>
        <ecNumber evidence="6">4.2.1.28</ecNumber>
    </recommendedName>
    <alternativeName>
        <fullName evidence="5">Diol dehydratase large subunit</fullName>
        <shortName>DDH large subunit</shortName>
    </alternativeName>
    <alternativeName>
        <fullName>Propanediol utilization protein PduC</fullName>
    </alternativeName>
</protein>
<evidence type="ECO:0000250" key="1">
    <source>
        <dbReference type="UniProtKB" id="P37450"/>
    </source>
</evidence>
<evidence type="ECO:0000255" key="2">
    <source>
        <dbReference type="PIRNR" id="PIRNR018507"/>
    </source>
</evidence>
<evidence type="ECO:0000269" key="3">
    <source>
    </source>
</evidence>
<evidence type="ECO:0000269" key="4">
    <source>
    </source>
</evidence>
<evidence type="ECO:0000303" key="5">
    <source>
    </source>
</evidence>
<evidence type="ECO:0000305" key="6">
    <source>
    </source>
</evidence>
<evidence type="ECO:0000305" key="7">
    <source>
    </source>
</evidence>
<reference key="1">
    <citation type="journal article" date="2008" name="J. Biol. Chem.">
        <title>Biochemical and Structural Insights into Bacterial Organelle Form and Biogenesis.</title>
        <authorList>
            <person name="Parsons J.B."/>
            <person name="Dinesh S.D."/>
            <person name="Deery E."/>
            <person name="Leech H.K."/>
            <person name="Brindley A.A."/>
            <person name="Heldt D."/>
            <person name="Frank S."/>
            <person name="Smales C.M."/>
            <person name="Lunsdorf H."/>
            <person name="Rambach A."/>
            <person name="Gass M.H."/>
            <person name="Bleloch A."/>
            <person name="McClean K.J."/>
            <person name="Munro A.W."/>
            <person name="Rigby S.E.J."/>
            <person name="Warren M.J."/>
            <person name="Prentice M.B."/>
        </authorList>
    </citation>
    <scope>NUCLEOTIDE SEQUENCE [GENOMIC DNA]</scope>
    <scope>FUNCTION</scope>
    <scope>IDENTIFICATION BY MASS SPECTROMETRY</scope>
    <scope>CATALYTIC ACTIVITY</scope>
    <scope>PATHWAY</scope>
    <scope>SUBCELLULAR LOCATION</scope>
</reference>
<reference key="2">
    <citation type="journal article" date="2010" name="Mol. Cell">
        <title>Synthesis of empty bacterial microcompartments, directed organelle protein incorporation, and evidence of filament-associated organelle movement.</title>
        <authorList>
            <person name="Parsons J.B."/>
            <person name="Frank S."/>
            <person name="Bhella D."/>
            <person name="Liang M."/>
            <person name="Prentice M.B."/>
            <person name="Mulvihill D.P."/>
            <person name="Warren M.J."/>
        </authorList>
    </citation>
    <scope>FUNCTION</scope>
    <scope>SUBCELLULAR LOCATION</scope>
</reference>
<feature type="chain" id="PRO_0000454258" description="Propanediol dehydratase large subunit">
    <location>
        <begin position="1"/>
        <end position="554"/>
    </location>
</feature>
<gene>
    <name evidence="5" type="primary">pduC</name>
</gene>
<proteinExistence type="evidence at protein level"/>
<accession>P0DUM7</accession>
<dbReference type="EC" id="4.2.1.28" evidence="6"/>
<dbReference type="EMBL" id="AM498294">
    <property type="protein sequence ID" value="CAM57285.1"/>
    <property type="molecule type" value="Genomic_DNA"/>
</dbReference>
<dbReference type="RefSeq" id="WP_003030249.1">
    <property type="nucleotide sequence ID" value="NZ_VWTQ01000002.1"/>
</dbReference>
<dbReference type="SMR" id="P0DUM7"/>
<dbReference type="GeneID" id="89548322"/>
<dbReference type="OrthoDB" id="304739at2"/>
<dbReference type="UniPathway" id="UPA00621"/>
<dbReference type="GO" id="GO:0031469">
    <property type="term" value="C:bacterial microcompartment"/>
    <property type="evidence" value="ECO:0007669"/>
    <property type="project" value="UniProtKB-SubCell"/>
</dbReference>
<dbReference type="GO" id="GO:0031419">
    <property type="term" value="F:cobalamin binding"/>
    <property type="evidence" value="ECO:0007669"/>
    <property type="project" value="UniProtKB-KW"/>
</dbReference>
<dbReference type="GO" id="GO:0016836">
    <property type="term" value="F:hydro-lyase activity"/>
    <property type="evidence" value="ECO:0007669"/>
    <property type="project" value="InterPro"/>
</dbReference>
<dbReference type="GO" id="GO:0051144">
    <property type="term" value="P:propanediol catabolic process"/>
    <property type="evidence" value="ECO:0007669"/>
    <property type="project" value="UniProtKB-UniPathway"/>
</dbReference>
<dbReference type="CDD" id="cd03687">
    <property type="entry name" value="Dehydratase_LU"/>
    <property type="match status" value="1"/>
</dbReference>
<dbReference type="Gene3D" id="3.20.20.350">
    <property type="entry name" value="Diol/glycerol dehydratase, large subunit"/>
    <property type="match status" value="1"/>
</dbReference>
<dbReference type="InterPro" id="IPR016176">
    <property type="entry name" value="Cbl-dep_enz_cat"/>
</dbReference>
<dbReference type="InterPro" id="IPR036999">
    <property type="entry name" value="Diol/glycerol_deHase_lsu_sf"/>
</dbReference>
<dbReference type="InterPro" id="IPR003206">
    <property type="entry name" value="Diol/glycerol_deHydtase_lsu"/>
</dbReference>
<dbReference type="NCBIfam" id="NF011979">
    <property type="entry name" value="PRK15444.1"/>
    <property type="match status" value="1"/>
</dbReference>
<dbReference type="Pfam" id="PF02286">
    <property type="entry name" value="Dehydratase_LU"/>
    <property type="match status" value="1"/>
</dbReference>
<dbReference type="PIRSF" id="PIRSF018507">
    <property type="entry name" value="Prpndl_dhdrts_lg"/>
    <property type="match status" value="1"/>
</dbReference>
<dbReference type="SUPFAM" id="SSF51703">
    <property type="entry name" value="Cobalamin (vitamin B12)-dependent enzymes"/>
    <property type="match status" value="1"/>
</dbReference>
<keyword id="KW-1283">Bacterial microcompartment</keyword>
<keyword id="KW-0846">Cobalamin</keyword>
<keyword id="KW-0170">Cobalt</keyword>
<keyword id="KW-0456">Lyase</keyword>
<comment type="function">
    <text evidence="4 6">Part of the PduCDE complex that catalyzes the dehydration of 1,2-propanediol (1,2-PD) to propionaldehyde (Probable). This subunit is directly targeted to the bacterial microcompartment (BMC) (PubMed:20417607).</text>
</comment>
<comment type="function">
    <text evidence="3">Expression of a cosmid containing the full 21-gene pdu operon in E.coli allows E.coli to grow on 1,2-propanediol (1,2-PD) with the appearance of BMCs in its cytoplasm.</text>
</comment>
<comment type="function">
    <text evidence="7">The 1,2-PD-specific bacterial microcompartment (BMC) concentrates low levels of 1,2-PD catabolic enzymes, concentrates volatile reaction intermediates thus enhancing pathway flux and keeps the level of toxic, mutagenic propionaldehyde low.</text>
</comment>
<comment type="catalytic activity">
    <reaction evidence="6">
        <text>propane-1,2-diol = propanal + H2O</text>
        <dbReference type="Rhea" id="RHEA:14569"/>
        <dbReference type="ChEBI" id="CHEBI:15377"/>
        <dbReference type="ChEBI" id="CHEBI:16997"/>
        <dbReference type="ChEBI" id="CHEBI:17153"/>
        <dbReference type="EC" id="4.2.1.28"/>
    </reaction>
</comment>
<comment type="cofactor">
    <cofactor evidence="1">
        <name>adenosylcob(III)alamin</name>
        <dbReference type="ChEBI" id="CHEBI:18408"/>
    </cofactor>
</comment>
<comment type="pathway">
    <text evidence="3">Polyol metabolism; 1,2-propanediol degradation.</text>
</comment>
<comment type="subunit">
    <text evidence="1">The propanediol dehydratase enzyme is a heterotrimeric complex composed of a large (PduC), a medium (PduD) and a small (PduE) subunit.</text>
</comment>
<comment type="subcellular location">
    <subcellularLocation>
        <location evidence="3 4">Bacterial microcompartment</location>
    </subcellularLocation>
    <text evidence="7">Probably in the interior of the BMC.</text>
</comment>
<comment type="similarity">
    <text evidence="2">Belongs to the diol/glycerol dehydratase large subunit family.</text>
</comment>
<sequence length="554" mass="60280">MRSKRFEALAKRPVNQDGFVKEWIEEGFIAMESPNDPKPSIKIVNGTVTELDGKSASEFDLIDHFIARYGINLARAEEVMAMDSVKLANMLCDPNVKRKDIVPLTTAMTPAKIVEVVSHMNVVEMMMAMQKMRARRTPSQQAHVTNVKDNPVQIAADAAEGAWRGFDEQETTVAVARYAPFNAIALLVGSQVGRPGVLTQCSLEEATELKLGMLGHTCYAETISVYGTEPVFTDGDDTPWSKGFLASSYASRGLKMRFTSGSGSEVQMGYAEGKSMLYLEARCIYITKAAGVQGLQNGSVSCIGVPSAVPSGIRAVLAENLICSSLDLECASSNDQTFTHSDMRRTARLLMQFLPGTDFISSGYSAVPNYDNMFAGSNEDAEDFDDYNVLQRDLKVDGGLRPVREEDVIAIRNKAARALQAVFAGMGLPPITDEEVEAATYAHGSKDMPERNIVEDIKFAQEIINKNRNGLEVVKALAQGGFTDVAQDMLNIQKAKLTGDYLHTSAIIVGDGQVLSAVNDVNDYAGPATGYRLQGERWEEIKNIPGALDPNELG</sequence>